<comment type="subcellular location">
    <subcellularLocation>
        <location evidence="2">Cell membrane</location>
        <topology evidence="2">Lipid-anchor</topology>
    </subcellularLocation>
</comment>
<comment type="similarity">
    <text evidence="2">To H.influenzae HI_0162.</text>
</comment>
<comment type="sequence caution" evidence="2">
    <conflict type="erroneous initiation">
        <sequence resource="EMBL-CDS" id="AAB40190"/>
    </conflict>
    <text>Extended N-terminus.</text>
</comment>
<sequence length="192" mass="20950">MFKKILFPLVALFMLAGCAKPPTTIEVSPTITLPQQDPSLMGVTVSINGADQRTDQALAKVTRDNQIVTLTASRDLRFLLQEVLEKQMTARGYMVGPNGPVNLQIIVSQLYADVSQGNVRYNIATKADIAIIATAQNGNKMTKNYRASYNVEGAFQASNKNIADAVNSVLTDTIADMSQDTSIHEFIKQNAR</sequence>
<proteinExistence type="inferred from homology"/>
<organism>
    <name type="scientific">Escherichia coli (strain K12)</name>
    <dbReference type="NCBI Taxonomy" id="83333"/>
    <lineage>
        <taxon>Bacteria</taxon>
        <taxon>Pseudomonadati</taxon>
        <taxon>Pseudomonadota</taxon>
        <taxon>Gammaproteobacteria</taxon>
        <taxon>Enterobacterales</taxon>
        <taxon>Enterobacteriaceae</taxon>
        <taxon>Escherichia</taxon>
    </lineage>
</organism>
<evidence type="ECO:0000255" key="1">
    <source>
        <dbReference type="PROSITE-ProRule" id="PRU00303"/>
    </source>
</evidence>
<evidence type="ECO:0000305" key="2"/>
<keyword id="KW-1003">Cell membrane</keyword>
<keyword id="KW-0449">Lipoprotein</keyword>
<keyword id="KW-0472">Membrane</keyword>
<keyword id="KW-0564">Palmitate</keyword>
<keyword id="KW-1185">Reference proteome</keyword>
<keyword id="KW-0732">Signal</keyword>
<accession>P0ADA5</accession>
<accession>P36671</accession>
<accession>P77210</accession>
<accession>Q2MBZ2</accession>
<name>YAJG_ECOLI</name>
<reference key="1">
    <citation type="journal article" date="1993" name="Mol. Microbiol.">
        <title>AmpG, a signal transducer in chromosomal beta-lactamase induction.</title>
        <authorList>
            <person name="Lindquist S."/>
            <person name="Weston-Hafer K."/>
            <person name="Schmidt H."/>
            <person name="Pul C."/>
            <person name="Korfmann G."/>
            <person name="Erickson J."/>
            <person name="Sanders C."/>
            <person name="Martin H.H."/>
            <person name="Normark S."/>
        </authorList>
    </citation>
    <scope>NUCLEOTIDE SEQUENCE [GENOMIC DNA]</scope>
</reference>
<reference key="2">
    <citation type="submission" date="1997-01" db="EMBL/GenBank/DDBJ databases">
        <title>Sequence of minutes 4-25 of Escherichia coli.</title>
        <authorList>
            <person name="Chung E."/>
            <person name="Allen E."/>
            <person name="Araujo R."/>
            <person name="Aparicio A.M."/>
            <person name="Davis K."/>
            <person name="Duncan M."/>
            <person name="Federspiel N."/>
            <person name="Hyman R."/>
            <person name="Kalman S."/>
            <person name="Komp C."/>
            <person name="Kurdi O."/>
            <person name="Lew H."/>
            <person name="Lin D."/>
            <person name="Namath A."/>
            <person name="Oefner P."/>
            <person name="Roberts D."/>
            <person name="Schramm S."/>
            <person name="Davis R.W."/>
        </authorList>
    </citation>
    <scope>NUCLEOTIDE SEQUENCE [LARGE SCALE GENOMIC DNA]</scope>
    <source>
        <strain>K12 / MG1655 / ATCC 47076</strain>
    </source>
</reference>
<reference key="3">
    <citation type="journal article" date="1997" name="Science">
        <title>The complete genome sequence of Escherichia coli K-12.</title>
        <authorList>
            <person name="Blattner F.R."/>
            <person name="Plunkett G. III"/>
            <person name="Bloch C.A."/>
            <person name="Perna N.T."/>
            <person name="Burland V."/>
            <person name="Riley M."/>
            <person name="Collado-Vides J."/>
            <person name="Glasner J.D."/>
            <person name="Rode C.K."/>
            <person name="Mayhew G.F."/>
            <person name="Gregor J."/>
            <person name="Davis N.W."/>
            <person name="Kirkpatrick H.A."/>
            <person name="Goeden M.A."/>
            <person name="Rose D.J."/>
            <person name="Mau B."/>
            <person name="Shao Y."/>
        </authorList>
    </citation>
    <scope>NUCLEOTIDE SEQUENCE [LARGE SCALE GENOMIC DNA]</scope>
    <source>
        <strain>K12 / MG1655 / ATCC 47076</strain>
    </source>
</reference>
<reference key="4">
    <citation type="journal article" date="2006" name="Mol. Syst. Biol.">
        <title>Highly accurate genome sequences of Escherichia coli K-12 strains MG1655 and W3110.</title>
        <authorList>
            <person name="Hayashi K."/>
            <person name="Morooka N."/>
            <person name="Yamamoto Y."/>
            <person name="Fujita K."/>
            <person name="Isono K."/>
            <person name="Choi S."/>
            <person name="Ohtsubo E."/>
            <person name="Baba T."/>
            <person name="Wanner B.L."/>
            <person name="Mori H."/>
            <person name="Horiuchi T."/>
        </authorList>
    </citation>
    <scope>NUCLEOTIDE SEQUENCE [LARGE SCALE GENOMIC DNA]</scope>
    <source>
        <strain>K12 / W3110 / ATCC 27325 / DSM 5911</strain>
    </source>
</reference>
<gene>
    <name type="primary">yajG</name>
    <name type="ordered locus">b0434</name>
    <name type="ordered locus">JW0424</name>
</gene>
<dbReference type="EMBL" id="S67816">
    <property type="protein sequence ID" value="AAB28883.2"/>
    <property type="molecule type" value="Genomic_DNA"/>
</dbReference>
<dbReference type="EMBL" id="U82664">
    <property type="protein sequence ID" value="AAB40190.1"/>
    <property type="status" value="ALT_INIT"/>
    <property type="molecule type" value="Genomic_DNA"/>
</dbReference>
<dbReference type="EMBL" id="U00096">
    <property type="protein sequence ID" value="AAC73537.2"/>
    <property type="molecule type" value="Genomic_DNA"/>
</dbReference>
<dbReference type="EMBL" id="AP009048">
    <property type="protein sequence ID" value="BAE76214.1"/>
    <property type="molecule type" value="Genomic_DNA"/>
</dbReference>
<dbReference type="PIR" id="B64773">
    <property type="entry name" value="B64773"/>
</dbReference>
<dbReference type="RefSeq" id="NP_414968.4">
    <property type="nucleotide sequence ID" value="NC_000913.3"/>
</dbReference>
<dbReference type="RefSeq" id="WP_001295326.1">
    <property type="nucleotide sequence ID" value="NZ_STEB01000007.1"/>
</dbReference>
<dbReference type="BMRB" id="P0ADA5"/>
<dbReference type="SMR" id="P0ADA5"/>
<dbReference type="BioGRID" id="4263032">
    <property type="interactions" value="160"/>
</dbReference>
<dbReference type="FunCoup" id="P0ADA5">
    <property type="interactions" value="61"/>
</dbReference>
<dbReference type="IntAct" id="P0ADA5">
    <property type="interactions" value="1"/>
</dbReference>
<dbReference type="STRING" id="511145.b0434"/>
<dbReference type="jPOST" id="P0ADA5"/>
<dbReference type="PaxDb" id="511145-b0434"/>
<dbReference type="EnsemblBacteria" id="AAC73537">
    <property type="protein sequence ID" value="AAC73537"/>
    <property type="gene ID" value="b0434"/>
</dbReference>
<dbReference type="GeneID" id="945521"/>
<dbReference type="KEGG" id="ecj:JW0424"/>
<dbReference type="KEGG" id="eco:b0434"/>
<dbReference type="KEGG" id="ecoc:C3026_02120"/>
<dbReference type="PATRIC" id="fig|1411691.4.peg.1843"/>
<dbReference type="EchoBASE" id="EB2099"/>
<dbReference type="eggNOG" id="COG3056">
    <property type="taxonomic scope" value="Bacteria"/>
</dbReference>
<dbReference type="HOGENOM" id="CLU_098976_0_0_6"/>
<dbReference type="InParanoid" id="P0ADA5"/>
<dbReference type="OMA" id="MTSRGYM"/>
<dbReference type="OrthoDB" id="6064766at2"/>
<dbReference type="PhylomeDB" id="P0ADA5"/>
<dbReference type="BioCyc" id="EcoCyc:EG12182-MONOMER"/>
<dbReference type="PRO" id="PR:P0ADA5"/>
<dbReference type="Proteomes" id="UP000000625">
    <property type="component" value="Chromosome"/>
</dbReference>
<dbReference type="GO" id="GO:0005886">
    <property type="term" value="C:plasma membrane"/>
    <property type="evidence" value="ECO:0007669"/>
    <property type="project" value="UniProtKB-SubCell"/>
</dbReference>
<dbReference type="InterPro" id="IPR005619">
    <property type="entry name" value="Uncharacterised_YajG"/>
</dbReference>
<dbReference type="NCBIfam" id="NF008637">
    <property type="entry name" value="PRK11627.1"/>
    <property type="match status" value="1"/>
</dbReference>
<dbReference type="Pfam" id="PF03923">
    <property type="entry name" value="Lipoprotein_16"/>
    <property type="match status" value="1"/>
</dbReference>
<dbReference type="PROSITE" id="PS51257">
    <property type="entry name" value="PROKAR_LIPOPROTEIN"/>
    <property type="match status" value="1"/>
</dbReference>
<protein>
    <recommendedName>
        <fullName>Uncharacterized lipoprotein YajG</fullName>
    </recommendedName>
</protein>
<feature type="signal peptide" evidence="1">
    <location>
        <begin position="1"/>
        <end position="17"/>
    </location>
</feature>
<feature type="chain" id="PRO_0000018037" description="Uncharacterized lipoprotein YajG">
    <location>
        <begin position="18"/>
        <end position="192"/>
    </location>
</feature>
<feature type="lipid moiety-binding region" description="N-palmitoyl cysteine" evidence="1">
    <location>
        <position position="18"/>
    </location>
</feature>
<feature type="lipid moiety-binding region" description="S-diacylglycerol cysteine" evidence="1">
    <location>
        <position position="18"/>
    </location>
</feature>